<comment type="function">
    <text evidence="1">Ligand-activated transcription factor key mediator of energy metabolism in adipose tissues. Receptor that binds peroxisome proliferators such as hypolipidemic drugs and fatty acids. Has a preference for poly-unsaturated fatty acids, such as gamma-linoleic acid and eicosapentanoic acid. Once activated by a ligand, the receptor binds to promoter elements of target genes. Regulates the peroxisomal beta-oxidation pathway of fatty acids. Functions as a transcription activator for the acyl-CoA oxidase gene. Decreases expression of NPC1L1 once activated by a ligand.</text>
</comment>
<comment type="subunit">
    <text>Heterodimer with the retinoid X receptor.</text>
</comment>
<comment type="subcellular location">
    <subcellularLocation>
        <location evidence="1">Nucleus</location>
    </subcellularLocation>
</comment>
<comment type="tissue specificity">
    <text>Ubiquitous.</text>
</comment>
<comment type="developmental stage">
    <text>Oocytes, embryos, and adults.</text>
</comment>
<comment type="PTM">
    <text evidence="1">'Lys-48'-linked polyubiquitinated; leading to proteasomal degradation. Deubiquitinated and stabilized by OTUD3.</text>
</comment>
<comment type="similarity">
    <text evidence="5">Belongs to the nuclear hormone receptor family. NR1 subfamily.</text>
</comment>
<reference key="1">
    <citation type="journal article" date="1992" name="Cell">
        <title>Control of the peroxisomal beta-oxidation pathway by a novel family of nuclear hormone receptors.</title>
        <authorList>
            <person name="Dreyer C."/>
            <person name="Krey G."/>
            <person name="Keller H."/>
            <person name="Givel F."/>
            <person name="Helftenbein G."/>
            <person name="Wahli W."/>
        </authorList>
    </citation>
    <scope>NUCLEOTIDE SEQUENCE [MRNA]</scope>
</reference>
<reference key="2">
    <citation type="journal article" date="1993" name="J. Steroid Biochem. Mol. Biol.">
        <title>Xenopus peroxisome proliferator activated receptors: genomic organization, response element recognition, heterodimer formation with retinoid X receptor and activation by fatty acids.</title>
        <authorList>
            <person name="Krey G."/>
            <person name="Keller H."/>
            <person name="Mahfoudi A."/>
            <person name="Medin J."/>
            <person name="Ozato K."/>
            <person name="Dreyer C."/>
            <person name="Wahli W."/>
        </authorList>
    </citation>
    <scope>CHARACTERIZATION</scope>
</reference>
<protein>
    <recommendedName>
        <fullName>Peroxisome proliferator-activated receptor delta</fullName>
        <shortName>PPAR-delta</shortName>
    </recommendedName>
    <alternativeName>
        <fullName>Nuclear receptor subfamily 1 group C member 2</fullName>
    </alternativeName>
    <alternativeName>
        <fullName>Peroxisome proliferator-activated receptor beta</fullName>
        <shortName>PPAR-beta</shortName>
    </alternativeName>
</protein>
<dbReference type="EMBL" id="M84162">
    <property type="protein sequence ID" value="AAA49936.1"/>
    <property type="molecule type" value="mRNA"/>
</dbReference>
<dbReference type="PIR" id="B42214">
    <property type="entry name" value="B42214"/>
</dbReference>
<dbReference type="RefSeq" id="NP_001081310.1">
    <property type="nucleotide sequence ID" value="NM_001087841.1"/>
</dbReference>
<dbReference type="SMR" id="P37233"/>
<dbReference type="GeneID" id="397768"/>
<dbReference type="KEGG" id="xla:397768"/>
<dbReference type="AGR" id="Xenbase:XB-GENE-865134"/>
<dbReference type="CTD" id="397768"/>
<dbReference type="Xenbase" id="XB-GENE-865134">
    <property type="gene designation" value="ppard.S"/>
</dbReference>
<dbReference type="OrthoDB" id="7634782at2759"/>
<dbReference type="Proteomes" id="UP000186698">
    <property type="component" value="Chromosome 2S"/>
</dbReference>
<dbReference type="Bgee" id="397768">
    <property type="expression patterns" value="Expressed in lung and 19 other cell types or tissues"/>
</dbReference>
<dbReference type="GO" id="GO:0005634">
    <property type="term" value="C:nucleus"/>
    <property type="evidence" value="ECO:0000318"/>
    <property type="project" value="GO_Central"/>
</dbReference>
<dbReference type="GO" id="GO:0001227">
    <property type="term" value="F:DNA-binding transcription repressor activity, RNA polymerase II-specific"/>
    <property type="evidence" value="ECO:0000318"/>
    <property type="project" value="GO_Central"/>
</dbReference>
<dbReference type="GO" id="GO:0004879">
    <property type="term" value="F:nuclear receptor activity"/>
    <property type="evidence" value="ECO:0000318"/>
    <property type="project" value="GO_Central"/>
</dbReference>
<dbReference type="GO" id="GO:0000978">
    <property type="term" value="F:RNA polymerase II cis-regulatory region sequence-specific DNA binding"/>
    <property type="evidence" value="ECO:0000318"/>
    <property type="project" value="GO_Central"/>
</dbReference>
<dbReference type="GO" id="GO:0008270">
    <property type="term" value="F:zinc ion binding"/>
    <property type="evidence" value="ECO:0007669"/>
    <property type="project" value="UniProtKB-KW"/>
</dbReference>
<dbReference type="GO" id="GO:0030154">
    <property type="term" value="P:cell differentiation"/>
    <property type="evidence" value="ECO:0000318"/>
    <property type="project" value="GO_Central"/>
</dbReference>
<dbReference type="GO" id="GO:0006631">
    <property type="term" value="P:fatty acid metabolic process"/>
    <property type="evidence" value="ECO:0000318"/>
    <property type="project" value="GO_Central"/>
</dbReference>
<dbReference type="GO" id="GO:0009755">
    <property type="term" value="P:hormone-mediated signaling pathway"/>
    <property type="evidence" value="ECO:0000318"/>
    <property type="project" value="GO_Central"/>
</dbReference>
<dbReference type="GO" id="GO:0030522">
    <property type="term" value="P:intracellular receptor signaling pathway"/>
    <property type="evidence" value="ECO:0000318"/>
    <property type="project" value="GO_Central"/>
</dbReference>
<dbReference type="GO" id="GO:0010887">
    <property type="term" value="P:negative regulation of cholesterol storage"/>
    <property type="evidence" value="ECO:0000318"/>
    <property type="project" value="GO_Central"/>
</dbReference>
<dbReference type="GO" id="GO:0050728">
    <property type="term" value="P:negative regulation of inflammatory response"/>
    <property type="evidence" value="ECO:0000318"/>
    <property type="project" value="GO_Central"/>
</dbReference>
<dbReference type="GO" id="GO:0000122">
    <property type="term" value="P:negative regulation of transcription by RNA polymerase II"/>
    <property type="evidence" value="ECO:0000318"/>
    <property type="project" value="GO_Central"/>
</dbReference>
<dbReference type="GO" id="GO:0045923">
    <property type="term" value="P:positive regulation of fatty acid metabolic process"/>
    <property type="evidence" value="ECO:0000318"/>
    <property type="project" value="GO_Central"/>
</dbReference>
<dbReference type="GO" id="GO:0045944">
    <property type="term" value="P:positive regulation of transcription by RNA polymerase II"/>
    <property type="evidence" value="ECO:0000318"/>
    <property type="project" value="GO_Central"/>
</dbReference>
<dbReference type="CDD" id="cd06965">
    <property type="entry name" value="NR_DBD_Ppar"/>
    <property type="match status" value="1"/>
</dbReference>
<dbReference type="CDD" id="cd06932">
    <property type="entry name" value="NR_LBD_PPAR"/>
    <property type="match status" value="1"/>
</dbReference>
<dbReference type="FunFam" id="1.10.565.10:FF:000013">
    <property type="entry name" value="Peroxisome proliferator-activated receptor delta"/>
    <property type="match status" value="1"/>
</dbReference>
<dbReference type="FunFam" id="3.30.50.10:FF:000010">
    <property type="entry name" value="Peroxisome proliferator-activated receptor gamma"/>
    <property type="match status" value="1"/>
</dbReference>
<dbReference type="Gene3D" id="3.30.50.10">
    <property type="entry name" value="Erythroid Transcription Factor GATA-1, subunit A"/>
    <property type="match status" value="1"/>
</dbReference>
<dbReference type="Gene3D" id="1.10.565.10">
    <property type="entry name" value="Retinoid X Receptor"/>
    <property type="match status" value="1"/>
</dbReference>
<dbReference type="InterPro" id="IPR003074">
    <property type="entry name" value="1Cnucl_rcpt"/>
</dbReference>
<dbReference type="InterPro" id="IPR003075">
    <property type="entry name" value="1Cnucl_rcpt_B"/>
</dbReference>
<dbReference type="InterPro" id="IPR035500">
    <property type="entry name" value="NHR-like_dom_sf"/>
</dbReference>
<dbReference type="InterPro" id="IPR000536">
    <property type="entry name" value="Nucl_hrmn_rcpt_lig-bd"/>
</dbReference>
<dbReference type="InterPro" id="IPR050234">
    <property type="entry name" value="Nuclear_hormone_rcpt_NR1"/>
</dbReference>
<dbReference type="InterPro" id="IPR001723">
    <property type="entry name" value="Nuclear_hrmn_rcpt"/>
</dbReference>
<dbReference type="InterPro" id="IPR001628">
    <property type="entry name" value="Znf_hrmn_rcpt"/>
</dbReference>
<dbReference type="InterPro" id="IPR013088">
    <property type="entry name" value="Znf_NHR/GATA"/>
</dbReference>
<dbReference type="PANTHER" id="PTHR24082">
    <property type="entry name" value="NUCLEAR HORMONE RECEPTOR"/>
    <property type="match status" value="1"/>
</dbReference>
<dbReference type="PANTHER" id="PTHR24082:SF15">
    <property type="entry name" value="PEROXISOME PROLIFERATOR-ACTIVATED RECEPTOR DELTA"/>
    <property type="match status" value="1"/>
</dbReference>
<dbReference type="Pfam" id="PF00104">
    <property type="entry name" value="Hormone_recep"/>
    <property type="match status" value="1"/>
</dbReference>
<dbReference type="Pfam" id="PF00105">
    <property type="entry name" value="zf-C4"/>
    <property type="match status" value="1"/>
</dbReference>
<dbReference type="PRINTS" id="PR01288">
    <property type="entry name" value="PROXISOMEPAR"/>
</dbReference>
<dbReference type="PRINTS" id="PR01290">
    <property type="entry name" value="PROXISOMPABR"/>
</dbReference>
<dbReference type="PRINTS" id="PR00398">
    <property type="entry name" value="STRDHORMONER"/>
</dbReference>
<dbReference type="PRINTS" id="PR00047">
    <property type="entry name" value="STROIDFINGER"/>
</dbReference>
<dbReference type="SMART" id="SM00430">
    <property type="entry name" value="HOLI"/>
    <property type="match status" value="1"/>
</dbReference>
<dbReference type="SMART" id="SM00399">
    <property type="entry name" value="ZnF_C4"/>
    <property type="match status" value="1"/>
</dbReference>
<dbReference type="SUPFAM" id="SSF57716">
    <property type="entry name" value="Glucocorticoid receptor-like (DNA-binding domain)"/>
    <property type="match status" value="1"/>
</dbReference>
<dbReference type="SUPFAM" id="SSF48508">
    <property type="entry name" value="Nuclear receptor ligand-binding domain"/>
    <property type="match status" value="1"/>
</dbReference>
<dbReference type="PROSITE" id="PS51843">
    <property type="entry name" value="NR_LBD"/>
    <property type="match status" value="1"/>
</dbReference>
<dbReference type="PROSITE" id="PS00031">
    <property type="entry name" value="NUCLEAR_REC_DBD_1"/>
    <property type="match status" value="1"/>
</dbReference>
<dbReference type="PROSITE" id="PS51030">
    <property type="entry name" value="NUCLEAR_REC_DBD_2"/>
    <property type="match status" value="1"/>
</dbReference>
<evidence type="ECO:0000250" key="1">
    <source>
        <dbReference type="UniProtKB" id="Q03181"/>
    </source>
</evidence>
<evidence type="ECO:0000255" key="2">
    <source>
        <dbReference type="PROSITE-ProRule" id="PRU00407"/>
    </source>
</evidence>
<evidence type="ECO:0000255" key="3">
    <source>
        <dbReference type="PROSITE-ProRule" id="PRU01189"/>
    </source>
</evidence>
<evidence type="ECO:0000256" key="4">
    <source>
        <dbReference type="SAM" id="MobiDB-lite"/>
    </source>
</evidence>
<evidence type="ECO:0000305" key="5"/>
<organism>
    <name type="scientific">Xenopus laevis</name>
    <name type="common">African clawed frog</name>
    <dbReference type="NCBI Taxonomy" id="8355"/>
    <lineage>
        <taxon>Eukaryota</taxon>
        <taxon>Metazoa</taxon>
        <taxon>Chordata</taxon>
        <taxon>Craniata</taxon>
        <taxon>Vertebrata</taxon>
        <taxon>Euteleostomi</taxon>
        <taxon>Amphibia</taxon>
        <taxon>Batrachia</taxon>
        <taxon>Anura</taxon>
        <taxon>Pipoidea</taxon>
        <taxon>Pipidae</taxon>
        <taxon>Xenopodinae</taxon>
        <taxon>Xenopus</taxon>
        <taxon>Xenopus</taxon>
    </lineage>
</organism>
<accession>P37233</accession>
<feature type="chain" id="PRO_0000053488" description="Peroxisome proliferator-activated receptor delta">
    <location>
        <begin position="1"/>
        <end position="396"/>
    </location>
</feature>
<feature type="domain" description="NR LBD" evidence="3">
    <location>
        <begin position="166"/>
        <end position="394"/>
    </location>
</feature>
<feature type="DNA-binding region" description="Nuclear receptor" evidence="2">
    <location>
        <begin position="28"/>
        <end position="102"/>
    </location>
</feature>
<feature type="zinc finger region" description="NR C4-type" evidence="2">
    <location>
        <begin position="31"/>
        <end position="51"/>
    </location>
</feature>
<feature type="zinc finger region" description="NR C4-type" evidence="2">
    <location>
        <begin position="68"/>
        <end position="90"/>
    </location>
</feature>
<feature type="region of interest" description="Disordered" evidence="4">
    <location>
        <begin position="1"/>
        <end position="24"/>
    </location>
</feature>
<feature type="compositionally biased region" description="Polar residues" evidence="4">
    <location>
        <begin position="15"/>
        <end position="24"/>
    </location>
</feature>
<name>PPARD_XENLA</name>
<gene>
    <name type="primary">ppard</name>
    <name type="synonym">nr1c2</name>
    <name type="synonym">pparb</name>
</gene>
<proteinExistence type="evidence at protein level"/>
<keyword id="KW-0010">Activator</keyword>
<keyword id="KW-0238">DNA-binding</keyword>
<keyword id="KW-0479">Metal-binding</keyword>
<keyword id="KW-0539">Nucleus</keyword>
<keyword id="KW-0675">Receptor</keyword>
<keyword id="KW-1185">Reference proteome</keyword>
<keyword id="KW-0804">Transcription</keyword>
<keyword id="KW-0805">Transcription regulation</keyword>
<keyword id="KW-0832">Ubl conjugation</keyword>
<keyword id="KW-0862">Zinc</keyword>
<keyword id="KW-0863">Zinc-finger</keyword>
<sequence>MKEEIPPRSPILDEQPSTPLEHQETSQSVDCKICGDRASGFHYGVHACEGCKGFFRRTIRMRLQYEHCDRNCKIQKKNRNKCQYCRFNKCLSLGMSHNAIRFGRMPESEKRKLVQAPVSDSAAPDSPVSDLDVLSQLIHSSYMNTFTMTKKRARDILTGRNSISPFVIHDMDTLWQAEQGTVWEQLPTQNLTGTEIGVHVFYRCQCTSVETVRALTDFAKRIPGFGTLYLNDQVTLLKYGVHEAIFCMLASLMNKDGLLVAGGRGFVTREFLRSLRQPFCHIMEPKFHFASKFNALELNDSDLALFVASIILCGDRPGLINPSQVEDIQEGILGALRRHLKASHTDAPFLFPKLLHKMADLRQLVTEHAELVQSIKRTESSAALHPLLQEIYRDMY</sequence>